<name>COX6_YEAST</name>
<protein>
    <recommendedName>
        <fullName>Cytochrome c oxidase subunit 6, mitochondrial</fullName>
    </recommendedName>
    <alternativeName>
        <fullName>Cytochrome c oxidase polypeptide VI</fullName>
    </alternativeName>
</protein>
<proteinExistence type="evidence at protein level"/>
<gene>
    <name type="primary">COX6</name>
    <name type="ordered locus">YHR051W</name>
</gene>
<sequence>MLSRAIFRNPVINRTLLRARPGAYHATRLTKNTFIQSRKYSDAHDEETFEEFTARYEKEFDEAYDLFEVQRVLNNCFSYDLVPAPAVIEKALRAARRVNDLPTAIRVFEALKYKVENEDQYKAYLDELKDVRQELGVPLKEELFPSSS</sequence>
<reference key="1">
    <citation type="journal article" date="1984" name="J. Biol. Chem.">
        <title>Isolation and sequence of the structural gene for cytochrome c oxidase subunit VI from Saccharomyces cerevisiae.</title>
        <authorList>
            <person name="Wright R.M."/>
            <person name="Ko C."/>
            <person name="Cumsky M.G."/>
            <person name="Poyton R.O."/>
        </authorList>
    </citation>
    <scope>NUCLEOTIDE SEQUENCE [GENOMIC DNA]</scope>
</reference>
<reference key="2">
    <citation type="journal article" date="1994" name="Science">
        <title>Complete nucleotide sequence of Saccharomyces cerevisiae chromosome VIII.</title>
        <authorList>
            <person name="Johnston M."/>
            <person name="Andrews S."/>
            <person name="Brinkman R."/>
            <person name="Cooper J."/>
            <person name="Ding H."/>
            <person name="Dover J."/>
            <person name="Du Z."/>
            <person name="Favello A."/>
            <person name="Fulton L."/>
            <person name="Gattung S."/>
            <person name="Geisel C."/>
            <person name="Kirsten J."/>
            <person name="Kucaba T."/>
            <person name="Hillier L.W."/>
            <person name="Jier M."/>
            <person name="Johnston L."/>
            <person name="Langston Y."/>
            <person name="Latreille P."/>
            <person name="Louis E.J."/>
            <person name="Macri C."/>
            <person name="Mardis E."/>
            <person name="Menezes S."/>
            <person name="Mouser L."/>
            <person name="Nhan M."/>
            <person name="Rifkin L."/>
            <person name="Riles L."/>
            <person name="St Peter H."/>
            <person name="Trevaskis E."/>
            <person name="Vaughan K."/>
            <person name="Vignati D."/>
            <person name="Wilcox L."/>
            <person name="Wohldman P."/>
            <person name="Waterston R."/>
            <person name="Wilson R."/>
            <person name="Vaudin M."/>
        </authorList>
    </citation>
    <scope>NUCLEOTIDE SEQUENCE [LARGE SCALE GENOMIC DNA]</scope>
    <source>
        <strain>ATCC 204508 / S288c</strain>
    </source>
</reference>
<reference key="3">
    <citation type="journal article" date="2014" name="G3 (Bethesda)">
        <title>The reference genome sequence of Saccharomyces cerevisiae: Then and now.</title>
        <authorList>
            <person name="Engel S.R."/>
            <person name="Dietrich F.S."/>
            <person name="Fisk D.G."/>
            <person name="Binkley G."/>
            <person name="Balakrishnan R."/>
            <person name="Costanzo M.C."/>
            <person name="Dwight S.S."/>
            <person name="Hitz B.C."/>
            <person name="Karra K."/>
            <person name="Nash R.S."/>
            <person name="Weng S."/>
            <person name="Wong E.D."/>
            <person name="Lloyd P."/>
            <person name="Skrzypek M.S."/>
            <person name="Miyasato S.R."/>
            <person name="Simison M."/>
            <person name="Cherry J.M."/>
        </authorList>
    </citation>
    <scope>GENOME REANNOTATION</scope>
    <source>
        <strain>ATCC 204508 / S288c</strain>
    </source>
</reference>
<reference key="4">
    <citation type="journal article" date="2007" name="Genome Res.">
        <title>Approaching a complete repository of sequence-verified protein-encoding clones for Saccharomyces cerevisiae.</title>
        <authorList>
            <person name="Hu Y."/>
            <person name="Rolfs A."/>
            <person name="Bhullar B."/>
            <person name="Murthy T.V.S."/>
            <person name="Zhu C."/>
            <person name="Berger M.F."/>
            <person name="Camargo A.A."/>
            <person name="Kelley F."/>
            <person name="McCarron S."/>
            <person name="Jepson D."/>
            <person name="Richardson A."/>
            <person name="Raphael J."/>
            <person name="Moreira D."/>
            <person name="Taycher E."/>
            <person name="Zuo D."/>
            <person name="Mohr S."/>
            <person name="Kane M.F."/>
            <person name="Williamson J."/>
            <person name="Simpson A.J.G."/>
            <person name="Bulyk M.L."/>
            <person name="Harlow E."/>
            <person name="Marsischky G."/>
            <person name="Kolodner R.D."/>
            <person name="LaBaer J."/>
        </authorList>
    </citation>
    <scope>NUCLEOTIDE SEQUENCE [GENOMIC DNA]</scope>
    <source>
        <strain>ATCC 204508 / S288c</strain>
    </source>
</reference>
<reference key="5">
    <citation type="journal article" date="1989" name="Nucleic Acids Res.">
        <title>Organization and expression of the COX6 genetic locus in Saccharomyces cerevisiae: multiple mRNAs with different 3' termini are transcribed from COX6 and regulated differentially.</title>
        <authorList>
            <person name="Wright R.M."/>
            <person name="Rosenzweig B."/>
            <person name="Poyton R.O."/>
        </authorList>
    </citation>
    <scope>NUCLEOTIDE SEQUENCE [GENOMIC DNA] OF 1-23</scope>
</reference>
<reference key="6">
    <citation type="journal article" date="1982" name="J. Biol. Chem.">
        <title>The amino acid sequence of cytochrome c oxidase subunit VI from Saccharomyces cerevisiae.</title>
        <authorList>
            <person name="Gregor I."/>
            <person name="Tsugita A."/>
        </authorList>
    </citation>
    <scope>PROTEIN SEQUENCE OF 41-148</scope>
</reference>
<reference key="7">
    <citation type="journal article" date="1992" name="J. Biol. Chem.">
        <title>Purification of yeast cytochrome c oxidase with a subunit composition resembling the mammalian enzyme.</title>
        <authorList>
            <person name="Taanman J.-W."/>
            <person name="Capaldi R.A."/>
        </authorList>
    </citation>
    <scope>PROTEIN SEQUENCE OF 41-54</scope>
    <scope>COMPOSITION OF THE CYTOCHROME C OXIDASE COMPLEX</scope>
</reference>
<reference key="8">
    <citation type="journal article" date="1995" name="Eur. J. Biochem.">
        <title>Kinetic properties and ligand binding of the eleven-subunit cytochrome-c oxidase from Saccharomyces cerevisiae isolated with a novel large-scale purification method.</title>
        <authorList>
            <person name="Geier B.M."/>
            <person name="Schagger H."/>
            <person name="Ortwein C."/>
            <person name="Link T.A."/>
            <person name="Hagen W.R."/>
            <person name="Brandt U."/>
            <person name="Von Jagow G."/>
        </authorList>
    </citation>
    <scope>PROTEIN SEQUENCE OF 41-43</scope>
    <scope>COMPOSITION OF THE CYTOCHROME C OXIDASE COMPLEX</scope>
</reference>
<reference key="9">
    <citation type="journal article" date="2000" name="EMBO J.">
        <title>Supercomplexes in the respiratory chains of yeast and mammalian mitochondria.</title>
        <authorList>
            <person name="Schaegger H."/>
            <person name="Pfeiffer K."/>
        </authorList>
    </citation>
    <scope>FORMATION OF CYTOCHROME BC1-CYTOCHROME C OXIDASE SUPERCOMPLEX</scope>
</reference>
<reference key="10">
    <citation type="journal article" date="2000" name="J. Biol. Chem.">
        <title>The cytochrome bc1 and cytochrome c oxidase complexes associate to form a single supracomplex in yeast mitochondria.</title>
        <authorList>
            <person name="Cruciat C.M."/>
            <person name="Brunner S."/>
            <person name="Baumann F."/>
            <person name="Neupert W."/>
            <person name="Stuart R.A."/>
        </authorList>
    </citation>
    <scope>FORMATION OF CYTOCHROME BC1-CYTOCHROME C OXIDASE SUPERCOMPLEX</scope>
</reference>
<reference key="11">
    <citation type="journal article" date="2003" name="Nature">
        <title>Global analysis of protein expression in yeast.</title>
        <authorList>
            <person name="Ghaemmaghami S."/>
            <person name="Huh W.-K."/>
            <person name="Bower K."/>
            <person name="Howson R.W."/>
            <person name="Belle A."/>
            <person name="Dephoure N."/>
            <person name="O'Shea E.K."/>
            <person name="Weissman J.S."/>
        </authorList>
    </citation>
    <scope>LEVEL OF PROTEIN EXPRESSION [LARGE SCALE ANALYSIS]</scope>
</reference>
<reference key="12">
    <citation type="journal article" date="2019" name="Nat. Struct. Mol. Biol.">
        <title>Cryo-EM structure of the yeast respiratory supercomplex.</title>
        <authorList>
            <person name="Rathore S."/>
            <person name="Berndtsson J."/>
            <person name="Marin-Buera L."/>
            <person name="Conrad J."/>
            <person name="Carroni M."/>
            <person name="Brzezinski P."/>
            <person name="Ott M."/>
        </authorList>
    </citation>
    <scope>STRUCTURE BY ELECTRON MICROSCOPY (3.23 ANGSTROMS)</scope>
</reference>
<reference key="13">
    <citation type="journal article" date="2019" name="Nat. Struct. Mol. Biol.">
        <title>Structure of yeast cytochrome c oxidase in a supercomplex with cytochrome bc1.</title>
        <authorList>
            <person name="Hartley A.M."/>
            <person name="Lukoyanova N."/>
            <person name="Zhang Y."/>
            <person name="Cabrera-Orefice A."/>
            <person name="Arnold S."/>
            <person name="Meunier B."/>
            <person name="Pinotsis N."/>
            <person name="Marechal A."/>
        </authorList>
    </citation>
    <scope>STRUCTURE BY ELECTRON MICROSCOPY (3.35 ANGSTROMS)</scope>
    <scope>FUNCTION</scope>
</reference>
<comment type="function">
    <text evidence="5 10">Component of the cytochrome c oxidase, the last enzyme in the mitochondrial electron transport chain which drives oxidative phosphorylation. The respiratory chain contains 3 multisubunit complexes succinate dehydrogenase (complex II, CII), ubiquinol-cytochrome c oxidoreductase (cytochrome b-c1 complex, complex III, CIII) and cytochrome c oxidase (complex IV, CIV), that cooperate to transfer electrons derived from NADH and succinate to molecular oxygen, creating an electrochemical gradient over the inner membrane that drives transmembrane transport and the ATP synthase. Cytochrome c oxidase is the component of the respiratory chain that catalyzes the reduction of oxygen to water. Electrons originating from reduced cytochrome c in the intermembrane space (IMS) are transferred via the dinuclear copper A center (CU(A)) of COX2 and heme A of COX1 to the active site in COX1, a binuclear center (BNC) formed by heme A3 and copper B (CU(B)). The BNC reduces molecular oxygen to 2 water molecules using 4 electrons from cytochrome c in the IMS and 4 protons from the mitochondrial matrix (Probable). COX6 may stabilize the region of CIV at the interface with CIII, supporting a role in formation or stability of the CIII(2)IV(2) SC (PubMed:30598554).</text>
</comment>
<comment type="pathway">
    <text>Energy metabolism; oxidative phosphorylation.</text>
</comment>
<comment type="subunit">
    <text evidence="1 2 5 6 8">Component of the cytochrome c oxidase (complex IV, CIV), a multisubunit enzyme composed of 12 subunits. The complex is composed of a catalytic core of 3 subunits COX1, COX2 and COX3, encoded in the mitochondrial DNA, and 9 supernumerary subunits COX4, COX5A (or COX5B), COX6, COX7, COX8, COX9, COX12, COX13 and COX26, which are encoded in the nuclear genome (PubMed:30598554, PubMed:30598556, PubMed:7851399). The complex exists as a monomer or a dimer and forms supercomplexes (SCs) in the inner mitochondrial membrane with a dimer of ubiquinol-cytochrome c oxidoreductase (cytochrome b-c1 complex, complex III, CIII), resulting in 2 different assemblies (supercomplexes III(2)IV and III(2)IV(2)) (PubMed:10764779, PubMed:10775262, PubMed:30598554, PubMed:30598556). COX26 interacts with COX1, COX2, COX6 and COX9 (PubMed:30598554).</text>
</comment>
<comment type="subcellular location">
    <subcellularLocation>
        <location evidence="5">Mitochondrion inner membrane</location>
        <topology evidence="5">Peripheral membrane protein</topology>
        <orientation evidence="5">Matrix side</orientation>
    </subcellularLocation>
</comment>
<comment type="miscellaneous">
    <text evidence="4">Present with 12500 molecules/cell in log phase SD medium.</text>
</comment>
<comment type="similarity">
    <text evidence="9">Belongs to the cytochrome c oxidase subunit 5A family.</text>
</comment>
<dbReference type="EMBL" id="M10138">
    <property type="protein sequence ID" value="AAA66900.1"/>
    <property type="molecule type" value="Genomic_DNA"/>
</dbReference>
<dbReference type="EMBL" id="U00062">
    <property type="protein sequence ID" value="AAB68899.1"/>
    <property type="molecule type" value="Genomic_DNA"/>
</dbReference>
<dbReference type="EMBL" id="AY558278">
    <property type="protein sequence ID" value="AAS56604.1"/>
    <property type="molecule type" value="Genomic_DNA"/>
</dbReference>
<dbReference type="EMBL" id="X14452">
    <property type="protein sequence ID" value="CAA32622.1"/>
    <property type="molecule type" value="Genomic_DNA"/>
</dbReference>
<dbReference type="EMBL" id="BK006934">
    <property type="protein sequence ID" value="DAA06744.1"/>
    <property type="molecule type" value="Genomic_DNA"/>
</dbReference>
<dbReference type="PIR" id="A22853">
    <property type="entry name" value="OTBY6"/>
</dbReference>
<dbReference type="RefSeq" id="NP_011918.1">
    <property type="nucleotide sequence ID" value="NM_001179181.1"/>
</dbReference>
<dbReference type="PDB" id="6GIQ">
    <property type="method" value="EM"/>
    <property type="resolution" value="3.23 A"/>
    <property type="chains" value="f=1-148"/>
</dbReference>
<dbReference type="PDB" id="6HU9">
    <property type="method" value="EM"/>
    <property type="resolution" value="3.35 A"/>
    <property type="chains" value="f/r=41-148"/>
</dbReference>
<dbReference type="PDB" id="6T0B">
    <property type="method" value="EM"/>
    <property type="resolution" value="2.80 A"/>
    <property type="chains" value="f/s=41-148"/>
</dbReference>
<dbReference type="PDB" id="6T15">
    <property type="method" value="EM"/>
    <property type="resolution" value="3.29 A"/>
    <property type="chains" value="f=41-148"/>
</dbReference>
<dbReference type="PDB" id="6YMX">
    <property type="method" value="EM"/>
    <property type="resolution" value="3.17 A"/>
    <property type="chains" value="f=47-145"/>
</dbReference>
<dbReference type="PDB" id="6YMY">
    <property type="method" value="EM"/>
    <property type="resolution" value="3.41 A"/>
    <property type="chains" value="f=47-145"/>
</dbReference>
<dbReference type="PDB" id="7Z10">
    <property type="method" value="EM"/>
    <property type="resolution" value="3.87 A"/>
    <property type="chains" value="f=45-148"/>
</dbReference>
<dbReference type="PDB" id="8DH6">
    <property type="method" value="EM"/>
    <property type="resolution" value="2.94 A"/>
    <property type="chains" value="f=41-148"/>
</dbReference>
<dbReference type="PDB" id="8E7S">
    <property type="method" value="EM"/>
    <property type="resolution" value="3.20 A"/>
    <property type="chains" value="Q/q=1-148"/>
</dbReference>
<dbReference type="PDB" id="8EC0">
    <property type="method" value="EM"/>
    <property type="resolution" value="3.30 A"/>
    <property type="chains" value="Q=1-148"/>
</dbReference>
<dbReference type="PDB" id="9ETZ">
    <property type="method" value="EM"/>
    <property type="resolution" value="2.40 A"/>
    <property type="chains" value="f=45-146"/>
</dbReference>
<dbReference type="PDBsum" id="6GIQ"/>
<dbReference type="PDBsum" id="6HU9"/>
<dbReference type="PDBsum" id="6T0B"/>
<dbReference type="PDBsum" id="6T15"/>
<dbReference type="PDBsum" id="6YMX"/>
<dbReference type="PDBsum" id="6YMY"/>
<dbReference type="PDBsum" id="7Z10"/>
<dbReference type="PDBsum" id="8DH6"/>
<dbReference type="PDBsum" id="8E7S"/>
<dbReference type="PDBsum" id="8EC0"/>
<dbReference type="PDBsum" id="9ETZ"/>
<dbReference type="EMDB" id="EMD-10318"/>
<dbReference type="EMDB" id="EMD-10334"/>
<dbReference type="EMDB" id="EMD-10335"/>
<dbReference type="EMDB" id="EMD-10340"/>
<dbReference type="EMDB" id="EMD-10375"/>
<dbReference type="EMDB" id="EMD-10376"/>
<dbReference type="EMDB" id="EMD-10847"/>
<dbReference type="EMDB" id="EMD-10848"/>
<dbReference type="EMDB" id="EMD-14436"/>
<dbReference type="EMDB" id="EMD-19963"/>
<dbReference type="EMDB" id="EMD-27430"/>
<dbReference type="EMDB" id="EMD-27940"/>
<dbReference type="EMDB" id="EMD-28011"/>
<dbReference type="SMR" id="P00427"/>
<dbReference type="BioGRID" id="36483">
    <property type="interactions" value="476"/>
</dbReference>
<dbReference type="ComplexPortal" id="CPX-1721">
    <property type="entry name" value="Mitochondrial respiratory chain complex IV, COX5A variant"/>
</dbReference>
<dbReference type="ComplexPortal" id="CPX-1722">
    <property type="entry name" value="Mitochondrial respiratory chain complex IV, COX5B variant"/>
</dbReference>
<dbReference type="DIP" id="DIP-6606N"/>
<dbReference type="FunCoup" id="P00427">
    <property type="interactions" value="612"/>
</dbReference>
<dbReference type="IntAct" id="P00427">
    <property type="interactions" value="49"/>
</dbReference>
<dbReference type="MINT" id="P00427"/>
<dbReference type="STRING" id="4932.YHR051W"/>
<dbReference type="TCDB" id="3.D.4.8.1">
    <property type="family name" value="the proton-translocating cytochrome oxidase (cox) superfamily"/>
</dbReference>
<dbReference type="iPTMnet" id="P00427"/>
<dbReference type="PaxDb" id="4932-YHR051W"/>
<dbReference type="PeptideAtlas" id="P00427"/>
<dbReference type="EnsemblFungi" id="YHR051W_mRNA">
    <property type="protein sequence ID" value="YHR051W"/>
    <property type="gene ID" value="YHR051W"/>
</dbReference>
<dbReference type="GeneID" id="856448"/>
<dbReference type="KEGG" id="sce:YHR051W"/>
<dbReference type="AGR" id="SGD:S000001093"/>
<dbReference type="SGD" id="S000001093">
    <property type="gene designation" value="COX6"/>
</dbReference>
<dbReference type="VEuPathDB" id="FungiDB:YHR051W"/>
<dbReference type="eggNOG" id="KOG4077">
    <property type="taxonomic scope" value="Eukaryota"/>
</dbReference>
<dbReference type="GeneTree" id="ENSGT00390000001424"/>
<dbReference type="HOGENOM" id="CLU_099086_0_1_1"/>
<dbReference type="InParanoid" id="P00427"/>
<dbReference type="OMA" id="MEKWPAD"/>
<dbReference type="OrthoDB" id="5778907at2759"/>
<dbReference type="BioCyc" id="MetaCyc:YHR051W-MONOMER"/>
<dbReference type="BioCyc" id="YEAST:YHR051W-MONOMER"/>
<dbReference type="Reactome" id="R-SCE-9837999">
    <property type="pathway name" value="Mitochondrial protein degradation"/>
</dbReference>
<dbReference type="UniPathway" id="UPA00705"/>
<dbReference type="BioGRID-ORCS" id="856448">
    <property type="hits" value="0 hits in 10 CRISPR screens"/>
</dbReference>
<dbReference type="PRO" id="PR:P00427"/>
<dbReference type="Proteomes" id="UP000002311">
    <property type="component" value="Chromosome VIII"/>
</dbReference>
<dbReference type="RNAct" id="P00427">
    <property type="molecule type" value="protein"/>
</dbReference>
<dbReference type="GO" id="GO:0005743">
    <property type="term" value="C:mitochondrial inner membrane"/>
    <property type="evidence" value="ECO:0007669"/>
    <property type="project" value="UniProtKB-SubCell"/>
</dbReference>
<dbReference type="GO" id="GO:0005739">
    <property type="term" value="C:mitochondrion"/>
    <property type="evidence" value="ECO:0007005"/>
    <property type="project" value="SGD"/>
</dbReference>
<dbReference type="GO" id="GO:0045277">
    <property type="term" value="C:respiratory chain complex IV"/>
    <property type="evidence" value="ECO:0000314"/>
    <property type="project" value="SGD"/>
</dbReference>
<dbReference type="GO" id="GO:0046872">
    <property type="term" value="F:metal ion binding"/>
    <property type="evidence" value="ECO:0007669"/>
    <property type="project" value="UniProtKB-KW"/>
</dbReference>
<dbReference type="GO" id="GO:0016491">
    <property type="term" value="F:oxidoreductase activity"/>
    <property type="evidence" value="ECO:0007669"/>
    <property type="project" value="UniProtKB-KW"/>
</dbReference>
<dbReference type="GO" id="GO:0006123">
    <property type="term" value="P:mitochondrial electron transport, cytochrome c to oxygen"/>
    <property type="evidence" value="ECO:0000314"/>
    <property type="project" value="SGD"/>
</dbReference>
<dbReference type="GO" id="GO:1902600">
    <property type="term" value="P:proton transmembrane transport"/>
    <property type="evidence" value="ECO:0007669"/>
    <property type="project" value="GOC"/>
</dbReference>
<dbReference type="CDD" id="cd00923">
    <property type="entry name" value="Cyt_c_Oxidase_Va"/>
    <property type="match status" value="1"/>
</dbReference>
<dbReference type="FunFam" id="1.25.40.40:FF:000001">
    <property type="entry name" value="Cytochrome c oxidase subunit VI"/>
    <property type="match status" value="1"/>
</dbReference>
<dbReference type="Gene3D" id="1.25.40.40">
    <property type="entry name" value="Cytochrome c oxidase, subunit Va/VI"/>
    <property type="match status" value="1"/>
</dbReference>
<dbReference type="InterPro" id="IPR003204">
    <property type="entry name" value="Cyt_c_oxidase_su5A/6"/>
</dbReference>
<dbReference type="InterPro" id="IPR036545">
    <property type="entry name" value="Cyt_c_oxidase_su5A/6_sf"/>
</dbReference>
<dbReference type="PANTHER" id="PTHR14200">
    <property type="entry name" value="CYTOCHROME C OXIDASE POLYPEPTIDE"/>
    <property type="match status" value="1"/>
</dbReference>
<dbReference type="PANTHER" id="PTHR14200:SF11">
    <property type="entry name" value="CYTOCHROME C OXIDASE SUBUNIT 5A, MITOCHONDRIAL"/>
    <property type="match status" value="1"/>
</dbReference>
<dbReference type="Pfam" id="PF02284">
    <property type="entry name" value="COX5A"/>
    <property type="match status" value="1"/>
</dbReference>
<dbReference type="SUPFAM" id="SSF48479">
    <property type="entry name" value="Cytochrome c oxidase subunit E"/>
    <property type="match status" value="1"/>
</dbReference>
<organism>
    <name type="scientific">Saccharomyces cerevisiae (strain ATCC 204508 / S288c)</name>
    <name type="common">Baker's yeast</name>
    <dbReference type="NCBI Taxonomy" id="559292"/>
    <lineage>
        <taxon>Eukaryota</taxon>
        <taxon>Fungi</taxon>
        <taxon>Dikarya</taxon>
        <taxon>Ascomycota</taxon>
        <taxon>Saccharomycotina</taxon>
        <taxon>Saccharomycetes</taxon>
        <taxon>Saccharomycetales</taxon>
        <taxon>Saccharomycetaceae</taxon>
        <taxon>Saccharomyces</taxon>
    </lineage>
</organism>
<feature type="transit peptide" description="Mitochondrion" evidence="3 7 8">
    <location>
        <begin position="1"/>
        <end position="40"/>
    </location>
</feature>
<feature type="chain" id="PRO_0000006108" description="Cytochrome c oxidase subunit 6, mitochondrial">
    <location>
        <begin position="41"/>
        <end position="148"/>
    </location>
</feature>
<feature type="helix" evidence="11">
    <location>
        <begin position="49"/>
        <end position="61"/>
    </location>
</feature>
<feature type="helix" evidence="11">
    <location>
        <begin position="66"/>
        <end position="76"/>
    </location>
</feature>
<feature type="strand" evidence="11">
    <location>
        <begin position="78"/>
        <end position="81"/>
    </location>
</feature>
<feature type="helix" evidence="11">
    <location>
        <begin position="85"/>
        <end position="97"/>
    </location>
</feature>
<feature type="helix" evidence="11">
    <location>
        <begin position="101"/>
        <end position="114"/>
    </location>
</feature>
<feature type="strand" evidence="11">
    <location>
        <begin position="115"/>
        <end position="117"/>
    </location>
</feature>
<feature type="helix" evidence="11">
    <location>
        <begin position="118"/>
        <end position="125"/>
    </location>
</feature>
<feature type="helix" evidence="11">
    <location>
        <begin position="129"/>
        <end position="134"/>
    </location>
</feature>
<feature type="helix" evidence="11">
    <location>
        <begin position="140"/>
        <end position="143"/>
    </location>
</feature>
<accession>P00427</accession>
<accession>D3DL00</accession>
<evidence type="ECO:0000269" key="1">
    <source>
    </source>
</evidence>
<evidence type="ECO:0000269" key="2">
    <source>
    </source>
</evidence>
<evidence type="ECO:0000269" key="3">
    <source>
    </source>
</evidence>
<evidence type="ECO:0000269" key="4">
    <source>
    </source>
</evidence>
<evidence type="ECO:0000269" key="5">
    <source>
    </source>
</evidence>
<evidence type="ECO:0000269" key="6">
    <source>
    </source>
</evidence>
<evidence type="ECO:0000269" key="7">
    <source>
    </source>
</evidence>
<evidence type="ECO:0000269" key="8">
    <source>
    </source>
</evidence>
<evidence type="ECO:0000305" key="9"/>
<evidence type="ECO:0000305" key="10">
    <source>
    </source>
</evidence>
<evidence type="ECO:0007829" key="11">
    <source>
        <dbReference type="PDB" id="9ETZ"/>
    </source>
</evidence>
<keyword id="KW-0002">3D-structure</keyword>
<keyword id="KW-0903">Direct protein sequencing</keyword>
<keyword id="KW-0349">Heme</keyword>
<keyword id="KW-0408">Iron</keyword>
<keyword id="KW-0472">Membrane</keyword>
<keyword id="KW-0479">Metal-binding</keyword>
<keyword id="KW-0496">Mitochondrion</keyword>
<keyword id="KW-0999">Mitochondrion inner membrane</keyword>
<keyword id="KW-0560">Oxidoreductase</keyword>
<keyword id="KW-1185">Reference proteome</keyword>
<keyword id="KW-0809">Transit peptide</keyword>